<sequence>MKHLSLLALAAVAPTTALAGVIDHQQVTFEKPPTHNQIEKFLIQLGPGESRWVTEEEKWALKLVGFYVLEGMNFFDITAESDQGFSVKSFEQTKVTYPSEIKYQKELAPLSKDLSKGNMRENLVKFTSFHTRYYKSETGVQSATWLLERVQQAIDDSGASKHGVKVEKFNHPWGQFSIIATIPGRSNKTVVVGAHQDSINLFLPSILAAPGADDDGSGTVTILEAFRVLLQSDAIREGKAANTVEFHWYSAEEAGLLGSQAIFSEYSKTGRDVKAMLQQDMTGYVEGTLRAGEVESVGVITDFVDPGLTEFIKLVIKGYCDIPFVLTKCGYACSDHASASRYGYPSAFVIESEFKRSNQKIHTTSDTIELLSFDHMLQHAKMTLGLAYELAFAEL</sequence>
<gene>
    <name type="primary">LAP1</name>
    <name type="ORF">UREG_03719</name>
</gene>
<dbReference type="EC" id="3.4.11.-"/>
<dbReference type="EMBL" id="CH476616">
    <property type="protein sequence ID" value="EEP78873.1"/>
    <property type="molecule type" value="Genomic_DNA"/>
</dbReference>
<dbReference type="RefSeq" id="XP_002544202.1">
    <property type="nucleotide sequence ID" value="XM_002544156.1"/>
</dbReference>
<dbReference type="SMR" id="C4JLL1"/>
<dbReference type="FunCoup" id="C4JLL1">
    <property type="interactions" value="24"/>
</dbReference>
<dbReference type="MEROPS" id="M28.022"/>
<dbReference type="GlyCosmos" id="C4JLL1">
    <property type="glycosylation" value="1 site, No reported glycans"/>
</dbReference>
<dbReference type="GeneID" id="8439582"/>
<dbReference type="KEGG" id="ure:UREG_03719"/>
<dbReference type="VEuPathDB" id="FungiDB:UREG_03719"/>
<dbReference type="eggNOG" id="KOG2195">
    <property type="taxonomic scope" value="Eukaryota"/>
</dbReference>
<dbReference type="HOGENOM" id="CLU_025866_0_0_1"/>
<dbReference type="InParanoid" id="C4JLL1"/>
<dbReference type="OMA" id="GMLQQDM"/>
<dbReference type="OrthoDB" id="2214at2759"/>
<dbReference type="Proteomes" id="UP000002058">
    <property type="component" value="Unassembled WGS sequence"/>
</dbReference>
<dbReference type="GO" id="GO:0005576">
    <property type="term" value="C:extracellular region"/>
    <property type="evidence" value="ECO:0007669"/>
    <property type="project" value="UniProtKB-SubCell"/>
</dbReference>
<dbReference type="GO" id="GO:0004177">
    <property type="term" value="F:aminopeptidase activity"/>
    <property type="evidence" value="ECO:0007669"/>
    <property type="project" value="UniProtKB-KW"/>
</dbReference>
<dbReference type="GO" id="GO:0046872">
    <property type="term" value="F:metal ion binding"/>
    <property type="evidence" value="ECO:0007669"/>
    <property type="project" value="UniProtKB-KW"/>
</dbReference>
<dbReference type="GO" id="GO:0008235">
    <property type="term" value="F:metalloexopeptidase activity"/>
    <property type="evidence" value="ECO:0007669"/>
    <property type="project" value="InterPro"/>
</dbReference>
<dbReference type="GO" id="GO:0006508">
    <property type="term" value="P:proteolysis"/>
    <property type="evidence" value="ECO:0007669"/>
    <property type="project" value="UniProtKB-KW"/>
</dbReference>
<dbReference type="CDD" id="cd03879">
    <property type="entry name" value="M28_AAP"/>
    <property type="match status" value="1"/>
</dbReference>
<dbReference type="FunFam" id="3.40.630.10:FF:000042">
    <property type="entry name" value="Peptide hydrolase"/>
    <property type="match status" value="1"/>
</dbReference>
<dbReference type="Gene3D" id="3.40.630.10">
    <property type="entry name" value="Zn peptidases"/>
    <property type="match status" value="1"/>
</dbReference>
<dbReference type="InterPro" id="IPR045175">
    <property type="entry name" value="M28_fam"/>
</dbReference>
<dbReference type="InterPro" id="IPR007484">
    <property type="entry name" value="Peptidase_M28"/>
</dbReference>
<dbReference type="PANTHER" id="PTHR12147:SF56">
    <property type="entry name" value="AMINOPEPTIDASE YDR415C-RELATED"/>
    <property type="match status" value="1"/>
</dbReference>
<dbReference type="PANTHER" id="PTHR12147">
    <property type="entry name" value="METALLOPEPTIDASE M28 FAMILY MEMBER"/>
    <property type="match status" value="1"/>
</dbReference>
<dbReference type="Pfam" id="PF04389">
    <property type="entry name" value="Peptidase_M28"/>
    <property type="match status" value="1"/>
</dbReference>
<dbReference type="SUPFAM" id="SSF53187">
    <property type="entry name" value="Zn-dependent exopeptidases"/>
    <property type="match status" value="1"/>
</dbReference>
<evidence type="ECO:0000250" key="1"/>
<evidence type="ECO:0000255" key="2"/>
<evidence type="ECO:0000305" key="3"/>
<proteinExistence type="inferred from homology"/>
<accession>C4JLL1</accession>
<comment type="function">
    <text evidence="1">Extracellular aminopeptidase that allows assimilation of proteinaceous substrates.</text>
</comment>
<comment type="cofactor">
    <cofactor evidence="1">
        <name>Zn(2+)</name>
        <dbReference type="ChEBI" id="CHEBI:29105"/>
    </cofactor>
    <text evidence="1">Binds 2 Zn(2+) ions per subunit.</text>
</comment>
<comment type="subunit">
    <text evidence="1">Monomer.</text>
</comment>
<comment type="subcellular location">
    <subcellularLocation>
        <location evidence="1">Secreted</location>
    </subcellularLocation>
</comment>
<comment type="similarity">
    <text evidence="3">Belongs to the peptidase M28 family. M28E subfamily.</text>
</comment>
<reference key="1">
    <citation type="journal article" date="2009" name="Genome Res.">
        <title>Comparative genomic analyses of the human fungal pathogens Coccidioides and their relatives.</title>
        <authorList>
            <person name="Sharpton T.J."/>
            <person name="Stajich J.E."/>
            <person name="Rounsley S.D."/>
            <person name="Gardner M.J."/>
            <person name="Wortman J.R."/>
            <person name="Jordar V.S."/>
            <person name="Maiti R."/>
            <person name="Kodira C.D."/>
            <person name="Neafsey D.E."/>
            <person name="Zeng Q."/>
            <person name="Hung C.-Y."/>
            <person name="McMahan C."/>
            <person name="Muszewska A."/>
            <person name="Grynberg M."/>
            <person name="Mandel M.A."/>
            <person name="Kellner E.M."/>
            <person name="Barker B.M."/>
            <person name="Galgiani J.N."/>
            <person name="Orbach M.J."/>
            <person name="Kirkland T.N."/>
            <person name="Cole G.T."/>
            <person name="Henn M.R."/>
            <person name="Birren B.W."/>
            <person name="Taylor J.W."/>
        </authorList>
    </citation>
    <scope>NUCLEOTIDE SEQUENCE [LARGE SCALE GENOMIC DNA]</scope>
    <source>
        <strain>UAMH 1704</strain>
    </source>
</reference>
<keyword id="KW-0031">Aminopeptidase</keyword>
<keyword id="KW-1015">Disulfide bond</keyword>
<keyword id="KW-0325">Glycoprotein</keyword>
<keyword id="KW-0378">Hydrolase</keyword>
<keyword id="KW-0479">Metal-binding</keyword>
<keyword id="KW-0645">Protease</keyword>
<keyword id="KW-1185">Reference proteome</keyword>
<keyword id="KW-0964">Secreted</keyword>
<keyword id="KW-0732">Signal</keyword>
<keyword id="KW-0862">Zinc</keyword>
<keyword id="KW-0865">Zymogen</keyword>
<name>LAP1_UNCRE</name>
<organism>
    <name type="scientific">Uncinocarpus reesii (strain UAMH 1704)</name>
    <dbReference type="NCBI Taxonomy" id="336963"/>
    <lineage>
        <taxon>Eukaryota</taxon>
        <taxon>Fungi</taxon>
        <taxon>Dikarya</taxon>
        <taxon>Ascomycota</taxon>
        <taxon>Pezizomycotina</taxon>
        <taxon>Eurotiomycetes</taxon>
        <taxon>Eurotiomycetidae</taxon>
        <taxon>Onygenales</taxon>
        <taxon>Onygenaceae</taxon>
        <taxon>Uncinocarpus</taxon>
    </lineage>
</organism>
<protein>
    <recommendedName>
        <fullName>Leucine aminopeptidase 1</fullName>
        <ecNumber>3.4.11.-</ecNumber>
    </recommendedName>
    <alternativeName>
        <fullName>Leucyl aminopeptidase 1</fullName>
        <shortName>LAP1</shortName>
    </alternativeName>
</protein>
<feature type="signal peptide" evidence="2">
    <location>
        <begin position="1"/>
        <end position="19"/>
    </location>
</feature>
<feature type="propeptide" id="PRO_0000412452" evidence="1">
    <location>
        <begin position="20"/>
        <end position="95"/>
    </location>
</feature>
<feature type="chain" id="PRO_0000412453" description="Leucine aminopeptidase 1">
    <location>
        <begin position="96"/>
        <end position="395"/>
    </location>
</feature>
<feature type="binding site" evidence="1">
    <location>
        <position position="195"/>
    </location>
    <ligand>
        <name>Zn(2+)</name>
        <dbReference type="ChEBI" id="CHEBI:29105"/>
        <label>1</label>
    </ligand>
</feature>
<feature type="binding site" evidence="1">
    <location>
        <position position="214"/>
    </location>
    <ligand>
        <name>Zn(2+)</name>
        <dbReference type="ChEBI" id="CHEBI:29105"/>
        <label>1</label>
    </ligand>
</feature>
<feature type="binding site" evidence="1">
    <location>
        <position position="214"/>
    </location>
    <ligand>
        <name>Zn(2+)</name>
        <dbReference type="ChEBI" id="CHEBI:29105"/>
        <label>2</label>
        <note>catalytic</note>
    </ligand>
</feature>
<feature type="binding site" evidence="1">
    <location>
        <position position="253"/>
    </location>
    <ligand>
        <name>Zn(2+)</name>
        <dbReference type="ChEBI" id="CHEBI:29105"/>
        <label>2</label>
        <note>catalytic</note>
    </ligand>
</feature>
<feature type="binding site" evidence="1">
    <location>
        <position position="280"/>
    </location>
    <ligand>
        <name>Zn(2+)</name>
        <dbReference type="ChEBI" id="CHEBI:29105"/>
        <label>1</label>
    </ligand>
</feature>
<feature type="binding site" evidence="1">
    <location>
        <position position="362"/>
    </location>
    <ligand>
        <name>Zn(2+)</name>
        <dbReference type="ChEBI" id="CHEBI:29105"/>
        <label>2</label>
        <note>catalytic</note>
    </ligand>
</feature>
<feature type="glycosylation site" description="N-linked (GlcNAc...) asparagine" evidence="2">
    <location>
        <position position="187"/>
    </location>
</feature>
<feature type="disulfide bond" evidence="1">
    <location>
        <begin position="329"/>
        <end position="333"/>
    </location>
</feature>